<reference key="1">
    <citation type="journal article" date="1992" name="Mol. Biol. Evol.">
        <title>Nucleotide sequence, function, activation, and evolution of the cryptic asc operon of Escherichia coli K12.</title>
        <authorList>
            <person name="Hall B.G."/>
            <person name="Xu L."/>
        </authorList>
    </citation>
    <scope>NUCLEOTIDE SEQUENCE [GENOMIC DNA]</scope>
    <source>
        <strain>K12</strain>
    </source>
</reference>
<reference key="2">
    <citation type="journal article" date="1997" name="Science">
        <title>The complete genome sequence of Escherichia coli K-12.</title>
        <authorList>
            <person name="Blattner F.R."/>
            <person name="Plunkett G. III"/>
            <person name="Bloch C.A."/>
            <person name="Perna N.T."/>
            <person name="Burland V."/>
            <person name="Riley M."/>
            <person name="Collado-Vides J."/>
            <person name="Glasner J.D."/>
            <person name="Rode C.K."/>
            <person name="Mayhew G.F."/>
            <person name="Gregor J."/>
            <person name="Davis N.W."/>
            <person name="Kirkpatrick H.A."/>
            <person name="Goeden M.A."/>
            <person name="Rose D.J."/>
            <person name="Mau B."/>
            <person name="Shao Y."/>
        </authorList>
    </citation>
    <scope>NUCLEOTIDE SEQUENCE [LARGE SCALE GENOMIC DNA]</scope>
    <source>
        <strain>K12 / MG1655 / ATCC 47076</strain>
    </source>
</reference>
<reference key="3">
    <citation type="journal article" date="2006" name="Nucleic Acids Res.">
        <title>Escherichia coli K-12: a cooperatively developed annotation snapshot -- 2005.</title>
        <authorList>
            <person name="Riley M."/>
            <person name="Abe T."/>
            <person name="Arnaud M.B."/>
            <person name="Berlyn M.K.B."/>
            <person name="Blattner F.R."/>
            <person name="Chaudhuri R.R."/>
            <person name="Glasner J.D."/>
            <person name="Horiuchi T."/>
            <person name="Keseler I.M."/>
            <person name="Kosuge T."/>
            <person name="Mori H."/>
            <person name="Perna N.T."/>
            <person name="Plunkett G. III"/>
            <person name="Rudd K.E."/>
            <person name="Serres M.H."/>
            <person name="Thomas G.H."/>
            <person name="Thomson N.R."/>
            <person name="Wishart D."/>
            <person name="Wanner B.L."/>
        </authorList>
    </citation>
    <scope>SEQUENCE REVISION TO 167-170</scope>
</reference>
<reference key="4">
    <citation type="journal article" date="2006" name="Mol. Syst. Biol.">
        <title>Highly accurate genome sequences of Escherichia coli K-12 strains MG1655 and W3110.</title>
        <authorList>
            <person name="Hayashi K."/>
            <person name="Morooka N."/>
            <person name="Yamamoto Y."/>
            <person name="Fujita K."/>
            <person name="Isono K."/>
            <person name="Choi S."/>
            <person name="Ohtsubo E."/>
            <person name="Baba T."/>
            <person name="Wanner B.L."/>
            <person name="Mori H."/>
            <person name="Horiuchi T."/>
        </authorList>
    </citation>
    <scope>NUCLEOTIDE SEQUENCE [LARGE SCALE GENOMIC DNA]</scope>
    <source>
        <strain>K12 / W3110 / ATCC 27325 / DSM 5911</strain>
    </source>
</reference>
<reference key="5">
    <citation type="journal article" date="2005" name="Science">
        <title>Global topology analysis of the Escherichia coli inner membrane proteome.</title>
        <authorList>
            <person name="Daley D.O."/>
            <person name="Rapp M."/>
            <person name="Granseth E."/>
            <person name="Melen K."/>
            <person name="Drew D."/>
            <person name="von Heijne G."/>
        </authorList>
    </citation>
    <scope>SUBCELLULAR LOCATION</scope>
    <source>
        <strain>K12 / MG1655 / ATCC 47076</strain>
    </source>
</reference>
<protein>
    <recommendedName>
        <fullName>PTS system arbutin-, cellobiose-, and salicin-specific EIIBC component</fullName>
    </recommendedName>
    <alternativeName>
        <fullName>EIIBC-Asc</fullName>
        <shortName>EII-Asc</shortName>
    </alternativeName>
    <domain>
        <recommendedName>
            <fullName>Arbutin-, cellobiose-, and salicin-specific phosphotransferase enzyme IIB component</fullName>
            <ecNumber>2.7.1.-</ecNumber>
        </recommendedName>
        <alternativeName>
            <fullName>PTS system arbutin-, cellobiose-, and salicin-specific EIIB component</fullName>
        </alternativeName>
    </domain>
    <domain>
        <recommendedName>
            <fullName>Arbutin, cellobiose, and salicin permease IIC component</fullName>
        </recommendedName>
        <alternativeName>
            <fullName>PTS system arbutin-, cellobiose-, and salicin-specific EIIC component</fullName>
        </alternativeName>
    </domain>
</protein>
<keyword id="KW-0997">Cell inner membrane</keyword>
<keyword id="KW-1003">Cell membrane</keyword>
<keyword id="KW-0418">Kinase</keyword>
<keyword id="KW-0472">Membrane</keyword>
<keyword id="KW-0598">Phosphotransferase system</keyword>
<keyword id="KW-1185">Reference proteome</keyword>
<keyword id="KW-0762">Sugar transport</keyword>
<keyword id="KW-0808">Transferase</keyword>
<keyword id="KW-0812">Transmembrane</keyword>
<keyword id="KW-1133">Transmembrane helix</keyword>
<keyword id="KW-0813">Transport</keyword>
<feature type="chain" id="PRO_0000186498" description="PTS system arbutin-, cellobiose-, and salicin-specific EIIBC component">
    <location>
        <begin position="1"/>
        <end position="485"/>
    </location>
</feature>
<feature type="transmembrane region" description="Helical" evidence="2">
    <location>
        <begin position="102"/>
        <end position="122"/>
    </location>
</feature>
<feature type="transmembrane region" description="Helical" evidence="2">
    <location>
        <begin position="147"/>
        <end position="167"/>
    </location>
</feature>
<feature type="transmembrane region" description="Helical" evidence="2">
    <location>
        <begin position="177"/>
        <end position="197"/>
    </location>
</feature>
<feature type="transmembrane region" description="Helical" evidence="2">
    <location>
        <begin position="207"/>
        <end position="227"/>
    </location>
</feature>
<feature type="transmembrane region" description="Helical" evidence="2">
    <location>
        <begin position="254"/>
        <end position="274"/>
    </location>
</feature>
<feature type="transmembrane region" description="Helical" evidence="2">
    <location>
        <begin position="285"/>
        <end position="305"/>
    </location>
</feature>
<feature type="transmembrane region" description="Helical" evidence="2">
    <location>
        <begin position="330"/>
        <end position="350"/>
    </location>
</feature>
<feature type="transmembrane region" description="Helical" evidence="2">
    <location>
        <begin position="363"/>
        <end position="383"/>
    </location>
</feature>
<feature type="transmembrane region" description="Helical" evidence="2">
    <location>
        <begin position="389"/>
        <end position="409"/>
    </location>
</feature>
<feature type="transmembrane region" description="Helical" evidence="2">
    <location>
        <begin position="433"/>
        <end position="453"/>
    </location>
</feature>
<feature type="domain" description="PTS EIIB type-1" evidence="1">
    <location>
        <begin position="1"/>
        <end position="88"/>
    </location>
</feature>
<feature type="domain" description="PTS EIIC type-1" evidence="2">
    <location>
        <begin position="108"/>
        <end position="470"/>
    </location>
</feature>
<feature type="active site" description="Phosphocysteine intermediate; for EIIB activity" evidence="1">
    <location>
        <position position="28"/>
    </location>
</feature>
<feature type="sequence conflict" description="In Ref. 2; AAA69225." evidence="4" ref="2">
    <original>ASAA</original>
    <variation>HLPR</variation>
    <location>
        <begin position="167"/>
        <end position="170"/>
    </location>
</feature>
<feature type="sequence conflict" description="In Ref. 1; AAA16429." evidence="4" ref="1">
    <original>A</original>
    <variation>Q</variation>
    <location>
        <position position="167"/>
    </location>
</feature>
<feature type="sequence conflict" description="In Ref. 1; AAA16429." evidence="4" ref="1">
    <original>R</original>
    <variation>H</variation>
    <location>
        <position position="311"/>
    </location>
</feature>
<dbReference type="EC" id="2.7.1.-"/>
<dbReference type="EMBL" id="M73326">
    <property type="protein sequence ID" value="AAA16429.1"/>
    <property type="molecule type" value="Unassigned_DNA"/>
</dbReference>
<dbReference type="EMBL" id="U29579">
    <property type="protein sequence ID" value="AAA69225.1"/>
    <property type="molecule type" value="Genomic_DNA"/>
</dbReference>
<dbReference type="EMBL" id="U00096">
    <property type="protein sequence ID" value="AAT48150.1"/>
    <property type="molecule type" value="Genomic_DNA"/>
</dbReference>
<dbReference type="EMBL" id="AP009048">
    <property type="protein sequence ID" value="BAE76792.1"/>
    <property type="molecule type" value="Genomic_DNA"/>
</dbReference>
<dbReference type="PIR" id="G65051">
    <property type="entry name" value="G65051"/>
</dbReference>
<dbReference type="RefSeq" id="WP_001107828.1">
    <property type="nucleotide sequence ID" value="NZ_LN832404.1"/>
</dbReference>
<dbReference type="RefSeq" id="YP_026182.1">
    <property type="nucleotide sequence ID" value="NC_000913.3"/>
</dbReference>
<dbReference type="SMR" id="P24241"/>
<dbReference type="BioGRID" id="4261308">
    <property type="interactions" value="11"/>
</dbReference>
<dbReference type="FunCoup" id="P24241">
    <property type="interactions" value="205"/>
</dbReference>
<dbReference type="STRING" id="511145.b2715"/>
<dbReference type="TCDB" id="4.A.1.2.3">
    <property type="family name" value="the pts glucose-glucoside (glc) family"/>
</dbReference>
<dbReference type="PaxDb" id="511145-b2715"/>
<dbReference type="EnsemblBacteria" id="AAT48150">
    <property type="protein sequence ID" value="AAT48150"/>
    <property type="gene ID" value="b2715"/>
</dbReference>
<dbReference type="GeneID" id="947154"/>
<dbReference type="KEGG" id="ecj:JW5435"/>
<dbReference type="KEGG" id="eco:b2715"/>
<dbReference type="KEGG" id="ecoc:C3026_14940"/>
<dbReference type="PATRIC" id="fig|1411691.4.peg.4026"/>
<dbReference type="EchoBASE" id="EB0084"/>
<dbReference type="eggNOG" id="COG1263">
    <property type="taxonomic scope" value="Bacteria"/>
</dbReference>
<dbReference type="eggNOG" id="COG1264">
    <property type="taxonomic scope" value="Bacteria"/>
</dbReference>
<dbReference type="HOGENOM" id="CLU_012312_2_0_6"/>
<dbReference type="InParanoid" id="P24241"/>
<dbReference type="OMA" id="TIYHVAP"/>
<dbReference type="OrthoDB" id="92465at2"/>
<dbReference type="PhylomeDB" id="P24241"/>
<dbReference type="BioCyc" id="EcoCyc:ASCF-MONOMER"/>
<dbReference type="BioCyc" id="MetaCyc:ASCF-MONOMER"/>
<dbReference type="PRO" id="PR:P24241"/>
<dbReference type="Proteomes" id="UP000000625">
    <property type="component" value="Chromosome"/>
</dbReference>
<dbReference type="GO" id="GO:0005886">
    <property type="term" value="C:plasma membrane"/>
    <property type="evidence" value="ECO:0000314"/>
    <property type="project" value="EcoCyc"/>
</dbReference>
<dbReference type="GO" id="GO:0016301">
    <property type="term" value="F:kinase activity"/>
    <property type="evidence" value="ECO:0007669"/>
    <property type="project" value="UniProtKB-KW"/>
</dbReference>
<dbReference type="GO" id="GO:0008982">
    <property type="term" value="F:protein-N(PI)-phosphohistidine-sugar phosphotransferase activity"/>
    <property type="evidence" value="ECO:0007669"/>
    <property type="project" value="InterPro"/>
</dbReference>
<dbReference type="GO" id="GO:0090589">
    <property type="term" value="F:protein-phosphocysteine-trehalose phosphotransferase system transporter activity"/>
    <property type="evidence" value="ECO:0000318"/>
    <property type="project" value="GO_Central"/>
</dbReference>
<dbReference type="GO" id="GO:0009401">
    <property type="term" value="P:phosphoenolpyruvate-dependent sugar phosphotransferase system"/>
    <property type="evidence" value="ECO:0000318"/>
    <property type="project" value="GO_Central"/>
</dbReference>
<dbReference type="GO" id="GO:0015771">
    <property type="term" value="P:trehalose transport"/>
    <property type="evidence" value="ECO:0000318"/>
    <property type="project" value="GO_Central"/>
</dbReference>
<dbReference type="CDD" id="cd00212">
    <property type="entry name" value="PTS_IIB_glc"/>
    <property type="match status" value="1"/>
</dbReference>
<dbReference type="FunFam" id="3.30.1360.60:FF:000001">
    <property type="entry name" value="PTS system glucose-specific IIBC component PtsG"/>
    <property type="match status" value="1"/>
</dbReference>
<dbReference type="Gene3D" id="3.30.1360.60">
    <property type="entry name" value="Glucose permease domain IIB"/>
    <property type="match status" value="1"/>
</dbReference>
<dbReference type="InterPro" id="IPR036878">
    <property type="entry name" value="Glu_permease_IIB"/>
</dbReference>
<dbReference type="InterPro" id="IPR018113">
    <property type="entry name" value="PTrfase_EIIB_Cys"/>
</dbReference>
<dbReference type="InterPro" id="IPR003352">
    <property type="entry name" value="PTS_EIIC"/>
</dbReference>
<dbReference type="InterPro" id="IPR013013">
    <property type="entry name" value="PTS_EIIC_1"/>
</dbReference>
<dbReference type="InterPro" id="IPR001996">
    <property type="entry name" value="PTS_IIB_1"/>
</dbReference>
<dbReference type="InterPro" id="IPR004719">
    <property type="entry name" value="PTS_maltose/Glc_sub_IIC"/>
</dbReference>
<dbReference type="InterPro" id="IPR050558">
    <property type="entry name" value="PTS_Sugar-Specific_Components"/>
</dbReference>
<dbReference type="NCBIfam" id="NF007311">
    <property type="entry name" value="PRK09796.1"/>
    <property type="match status" value="1"/>
</dbReference>
<dbReference type="NCBIfam" id="TIGR00852">
    <property type="entry name" value="pts-Glc"/>
    <property type="match status" value="1"/>
</dbReference>
<dbReference type="PANTHER" id="PTHR30175">
    <property type="entry name" value="PHOSPHOTRANSFERASE SYSTEM TRANSPORT PROTEIN"/>
    <property type="match status" value="1"/>
</dbReference>
<dbReference type="PANTHER" id="PTHR30175:SF1">
    <property type="entry name" value="PTS SYSTEM ARBUTIN-, CELLOBIOSE-, AND SALICIN-SPECIFIC EIIBC COMPONENT-RELATED"/>
    <property type="match status" value="1"/>
</dbReference>
<dbReference type="Pfam" id="PF00367">
    <property type="entry name" value="PTS_EIIB"/>
    <property type="match status" value="1"/>
</dbReference>
<dbReference type="Pfam" id="PF02378">
    <property type="entry name" value="PTS_EIIC"/>
    <property type="match status" value="1"/>
</dbReference>
<dbReference type="SUPFAM" id="SSF55604">
    <property type="entry name" value="Glucose permease domain IIB"/>
    <property type="match status" value="1"/>
</dbReference>
<dbReference type="PROSITE" id="PS51098">
    <property type="entry name" value="PTS_EIIB_TYPE_1"/>
    <property type="match status" value="1"/>
</dbReference>
<dbReference type="PROSITE" id="PS01035">
    <property type="entry name" value="PTS_EIIB_TYPE_1_CYS"/>
    <property type="match status" value="1"/>
</dbReference>
<dbReference type="PROSITE" id="PS51103">
    <property type="entry name" value="PTS_EIIC_TYPE_1"/>
    <property type="match status" value="1"/>
</dbReference>
<accession>P24241</accession>
<accession>Q2MAB4</accession>
<accession>Q46880</accession>
<accession>Q6BF64</accession>
<organism>
    <name type="scientific">Escherichia coli (strain K12)</name>
    <dbReference type="NCBI Taxonomy" id="83333"/>
    <lineage>
        <taxon>Bacteria</taxon>
        <taxon>Pseudomonadati</taxon>
        <taxon>Pseudomonadota</taxon>
        <taxon>Gammaproteobacteria</taxon>
        <taxon>Enterobacterales</taxon>
        <taxon>Enterobacteriaceae</taxon>
        <taxon>Escherichia</taxon>
    </lineage>
</organism>
<evidence type="ECO:0000255" key="1">
    <source>
        <dbReference type="PROSITE-ProRule" id="PRU00421"/>
    </source>
</evidence>
<evidence type="ECO:0000255" key="2">
    <source>
        <dbReference type="PROSITE-ProRule" id="PRU00426"/>
    </source>
</evidence>
<evidence type="ECO:0000269" key="3">
    <source>
    </source>
</evidence>
<evidence type="ECO:0000305" key="4"/>
<proteinExistence type="inferred from homology"/>
<gene>
    <name type="primary">ascF</name>
    <name type="ordered locus">b2715</name>
    <name type="ordered locus">JW5435</name>
</gene>
<sequence length="485" mass="51026">MAKNYAALARSVIAALGGVDNISAVTHCMTRLRFVIKDDALIDSPTLKTIPGVLGVVRSDNQCQVIIGNTVSQAFQEVVSLLPGDMQPAQPVGKPKLTLRRIGAGILDALIGTMSPLIPAIIGGSMVKLLAMILEMSGVLTKGSPTLTILNVIGDGAFFFLPLMVAASAAIKFKTNMSLAIAIAGVLVHPSFIELMAKAAQGEHVEFALIPVTAVKYTYTVIPALVMTWCLSYIERWVDSITPAVTKNFLKPMLIVLIAAPLAILLIGPIGIWIGSAISALVYTIHGYLGWLSVAIMGALWPLLVMTGMHRVFTPTIIQTIAETGKEGMVMPSEIGANLSLGGSSLAVAWKTKNPELRQTALAAAASAIMAGISEPALYGVAIRLKRPLIASLISGFICGAVAGMAGLASHSMAAPGLFTSVQFFDPANPMSIVWVFAVMALAVVLSFILTLLLGFEDIPVEEAAAQARKYQSVQPTVAKEVSLN</sequence>
<comment type="function">
    <text>The phosphoenolpyruvate-dependent sugar phosphotransferase system (sugar PTS), a major carbohydrate active -transport system, catalyzes the phosphorylation of incoming sugar substrates concomitantly with their translocation across the cell membrane. This system is involved in arbutin, cellobiose, and salicin transport.</text>
</comment>
<comment type="subcellular location">
    <subcellularLocation>
        <location evidence="2 3">Cell inner membrane</location>
        <topology evidence="2 3">Multi-pass membrane protein</topology>
    </subcellularLocation>
</comment>
<comment type="domain">
    <text>The EIIB domain is phosphorylated by phospho-EIIA on a cysteinyl or histidyl residue, depending on the transported sugar. Then, it transfers the phosphoryl group to the sugar substrate concomitantly with the sugar uptake processed by the EIIC domain.</text>
</comment>
<comment type="domain">
    <text>The EIIC domain forms the PTS system translocation channel and contains the specific substrate-binding site.</text>
</comment>
<name>PTIBC_ECOLI</name>